<evidence type="ECO:0000250" key="1"/>
<evidence type="ECO:0000255" key="2"/>
<evidence type="ECO:0000255" key="3">
    <source>
        <dbReference type="PROSITE-ProRule" id="PRU10101"/>
    </source>
</evidence>
<evidence type="ECO:0000305" key="4"/>
<evidence type="ECO:0000305" key="5">
    <source>
    </source>
</evidence>
<proteinExistence type="inferred from homology"/>
<accession>O69395</accession>
<feature type="signal peptide" evidence="2">
    <location>
        <begin position="1"/>
        <end position="28"/>
    </location>
</feature>
<feature type="chain" id="PRO_0000016995" description="Beta-lactamase Toho-2">
    <location>
        <begin position="29"/>
        <end position="289"/>
    </location>
</feature>
<feature type="active site" description="Acyl-ester intermediate" evidence="3">
    <location>
        <position position="73"/>
    </location>
</feature>
<feature type="binding site" evidence="1">
    <location>
        <begin position="235"/>
        <end position="237"/>
    </location>
    <ligand>
        <name>substrate</name>
    </ligand>
</feature>
<comment type="function">
    <text>Hydrolyzes beta-lactam antibiotics such as penicillin G, carbenicillin, cephaloridine, cefoxitin, cefotaxime, ceftazidime, and aztreonam. Has especially increased relative hydrolysis rates for cephalothin, cephaloridine, cefotaxime and ceftizoxime.</text>
</comment>
<comment type="catalytic activity">
    <reaction evidence="3">
        <text>a beta-lactam + H2O = a substituted beta-amino acid</text>
        <dbReference type="Rhea" id="RHEA:20401"/>
        <dbReference type="ChEBI" id="CHEBI:15377"/>
        <dbReference type="ChEBI" id="CHEBI:35627"/>
        <dbReference type="ChEBI" id="CHEBI:140347"/>
        <dbReference type="EC" id="3.5.2.6"/>
    </reaction>
</comment>
<comment type="activity regulation">
    <text>Inhibited 16-fold better by the beta-lactamase inhibitor tazobactam than by clavulanic acid.</text>
</comment>
<comment type="miscellaneous">
    <text evidence="5">The class A beta-lactamase family has a specific amino-acid numbering system, sometimes called Ambler or ABL numbering and often misspelt as Amber. A multiple sequence alignment was used to derive a consensus sequence and then the consensus was numbered taking into account insertions and deletions. This allows use of identical numbers, e.g. for active site residues, despite differences in protein length. UniProt always uses natural numbering of residues, hence there appear to be differences in numbering between this entry and some papers.</text>
</comment>
<comment type="similarity">
    <text evidence="4">Belongs to the class-A beta-lactamase family.</text>
</comment>
<reference key="1">
    <citation type="journal article" date="1998" name="Antimicrob. Agents Chemother.">
        <title>Cloning and sequencing of the gene encoding Toho-2, a class A beta-lactamase preferentially inhibited by tazobactam.</title>
        <authorList>
            <person name="Ma L."/>
            <person name="Ishii Y."/>
            <person name="Ishiguro M."/>
            <person name="Matsuzawa H."/>
            <person name="Yamaguchi K."/>
        </authorList>
    </citation>
    <scope>NUCLEOTIDE SEQUENCE [GENOMIC DNA]</scope>
    <source>
        <strain>TUM1083</strain>
    </source>
</reference>
<reference key="2">
    <citation type="journal article" date="1991" name="Biochem. J.">
        <title>A standard numbering scheme for the class A beta-lactamases.</title>
        <authorList>
            <person name="Ambler R.P."/>
            <person name="Coulson A.F."/>
            <person name="Frere J.M."/>
            <person name="Ghuysen J.M."/>
            <person name="Joris B."/>
            <person name="Forsman M."/>
            <person name="Levesque R.C."/>
            <person name="Tiraby G."/>
            <person name="Waley S.G."/>
        </authorList>
    </citation>
    <scope>AMINO ACID NUMBERING SCHEME</scope>
</reference>
<sequence>MVTKRVQRMMSAAAACIPLLLGSPTLYAQTSAVQQKLAALEKSSGGRLGVALIDTADNTQVLYRGDERFPMCSTSKVMAAAAVLKQSETQKQLLNQPVEIKPADLVNYNPIAEKHVNGTMTLAELSAAALQYSDNTAMNKLIAQLGGPGGVTAFARAIGDETFRLDRTEPTLNTAIPGDPRDTTTARAGADVASLRWVMRWAKPSGAVGDVAQRQYDRAAGIRAGLPTSWTVGDKTGSGDYGTTNDIAVIWPQGRAPLVLVTYFTQPQQNAESRRDVLASAARIIAEGL</sequence>
<organism>
    <name type="scientific">Escherichia coli</name>
    <dbReference type="NCBI Taxonomy" id="562"/>
    <lineage>
        <taxon>Bacteria</taxon>
        <taxon>Pseudomonadati</taxon>
        <taxon>Pseudomonadota</taxon>
        <taxon>Gammaproteobacteria</taxon>
        <taxon>Enterobacterales</taxon>
        <taxon>Enterobacteriaceae</taxon>
        <taxon>Escherichia</taxon>
    </lineage>
</organism>
<name>BLT2_ECOLX</name>
<gene>
    <name type="primary">bla</name>
</gene>
<keyword id="KW-0046">Antibiotic resistance</keyword>
<keyword id="KW-0378">Hydrolase</keyword>
<keyword id="KW-0614">Plasmid</keyword>
<keyword id="KW-0732">Signal</keyword>
<protein>
    <recommendedName>
        <fullName>Beta-lactamase Toho-2</fullName>
        <ecNumber>3.5.2.6</ecNumber>
    </recommendedName>
</protein>
<geneLocation type="plasmid">
    <name>IncFII pMTY036</name>
</geneLocation>
<dbReference type="EC" id="3.5.2.6"/>
<dbReference type="EMBL" id="D89862">
    <property type="protein sequence ID" value="BAA28282.1"/>
    <property type="molecule type" value="Genomic_DNA"/>
</dbReference>
<dbReference type="SMR" id="O69395"/>
<dbReference type="CARD" id="ARO:3001907">
    <property type="molecule name" value="CTX-M-45"/>
    <property type="mechanism identifier" value="ARO:0001004"/>
    <property type="mechanism name" value="antibiotic inactivation"/>
</dbReference>
<dbReference type="KEGG" id="ag:BAA28282"/>
<dbReference type="GO" id="GO:0008800">
    <property type="term" value="F:beta-lactamase activity"/>
    <property type="evidence" value="ECO:0007669"/>
    <property type="project" value="UniProtKB-EC"/>
</dbReference>
<dbReference type="GO" id="GO:0030655">
    <property type="term" value="P:beta-lactam antibiotic catabolic process"/>
    <property type="evidence" value="ECO:0007669"/>
    <property type="project" value="InterPro"/>
</dbReference>
<dbReference type="GO" id="GO:0046677">
    <property type="term" value="P:response to antibiotic"/>
    <property type="evidence" value="ECO:0007669"/>
    <property type="project" value="UniProtKB-KW"/>
</dbReference>
<dbReference type="Gene3D" id="3.40.710.10">
    <property type="entry name" value="DD-peptidase/beta-lactamase superfamily"/>
    <property type="match status" value="1"/>
</dbReference>
<dbReference type="InterPro" id="IPR012338">
    <property type="entry name" value="Beta-lactam/transpept-like"/>
</dbReference>
<dbReference type="InterPro" id="IPR045155">
    <property type="entry name" value="Beta-lactam_cat"/>
</dbReference>
<dbReference type="InterPro" id="IPR000871">
    <property type="entry name" value="Beta-lactam_class-A"/>
</dbReference>
<dbReference type="InterPro" id="IPR023650">
    <property type="entry name" value="Beta-lactam_class-A_AS"/>
</dbReference>
<dbReference type="NCBIfam" id="NF033103">
    <property type="entry name" value="bla_class_A"/>
    <property type="match status" value="1"/>
</dbReference>
<dbReference type="PANTHER" id="PTHR35333">
    <property type="entry name" value="BETA-LACTAMASE"/>
    <property type="match status" value="1"/>
</dbReference>
<dbReference type="PANTHER" id="PTHR35333:SF3">
    <property type="entry name" value="BETA-LACTAMASE-TYPE TRANSPEPTIDASE FOLD CONTAINING PROTEIN"/>
    <property type="match status" value="1"/>
</dbReference>
<dbReference type="Pfam" id="PF13354">
    <property type="entry name" value="Beta-lactamase2"/>
    <property type="match status" value="1"/>
</dbReference>
<dbReference type="PRINTS" id="PR00118">
    <property type="entry name" value="BLACTAMASEA"/>
</dbReference>
<dbReference type="SUPFAM" id="SSF56601">
    <property type="entry name" value="beta-lactamase/transpeptidase-like"/>
    <property type="match status" value="1"/>
</dbReference>
<dbReference type="PROSITE" id="PS00146">
    <property type="entry name" value="BETA_LACTAMASE_A"/>
    <property type="match status" value="1"/>
</dbReference>